<reference key="1">
    <citation type="submission" date="2008-04" db="EMBL/GenBank/DDBJ databases">
        <title>Complete sequence of chromosome 1 of Burkholderia ambifaria MC40-6.</title>
        <authorList>
            <person name="Copeland A."/>
            <person name="Lucas S."/>
            <person name="Lapidus A."/>
            <person name="Glavina del Rio T."/>
            <person name="Dalin E."/>
            <person name="Tice H."/>
            <person name="Pitluck S."/>
            <person name="Chain P."/>
            <person name="Malfatti S."/>
            <person name="Shin M."/>
            <person name="Vergez L."/>
            <person name="Lang D."/>
            <person name="Schmutz J."/>
            <person name="Larimer F."/>
            <person name="Land M."/>
            <person name="Hauser L."/>
            <person name="Kyrpides N."/>
            <person name="Lykidis A."/>
            <person name="Ramette A."/>
            <person name="Konstantinidis K."/>
            <person name="Tiedje J."/>
            <person name="Richardson P."/>
        </authorList>
    </citation>
    <scope>NUCLEOTIDE SEQUENCE [LARGE SCALE GENOMIC DNA]</scope>
    <source>
        <strain>MC40-6</strain>
    </source>
</reference>
<sequence length="124" mass="12505">MAIAKEDILAAVEGMTVLELNELVKAFEEKFGVSAAAVAVAGPAGGGAAAAAEEKTEFTVVLTEAGSNKVAVIKAVRELTGLGLKEAKDVVDGAPKAVKEGVDKAAADEAKKKLEDAGAKVEVK</sequence>
<keyword id="KW-0687">Ribonucleoprotein</keyword>
<keyword id="KW-0689">Ribosomal protein</keyword>
<gene>
    <name evidence="1" type="primary">rplL</name>
    <name type="ordered locus">BamMC406_0267</name>
</gene>
<comment type="function">
    <text evidence="1">Forms part of the ribosomal stalk which helps the ribosome interact with GTP-bound translation factors. Is thus essential for accurate translation.</text>
</comment>
<comment type="subunit">
    <text evidence="1">Homodimer. Part of the ribosomal stalk of the 50S ribosomal subunit. Forms a multimeric L10(L12)X complex, where L10 forms an elongated spine to which 2 to 4 L12 dimers bind in a sequential fashion. Binds GTP-bound translation factors.</text>
</comment>
<comment type="similarity">
    <text evidence="1">Belongs to the bacterial ribosomal protein bL12 family.</text>
</comment>
<feature type="chain" id="PRO_1000121401" description="Large ribosomal subunit protein bL12">
    <location>
        <begin position="1"/>
        <end position="124"/>
    </location>
</feature>
<evidence type="ECO:0000255" key="1">
    <source>
        <dbReference type="HAMAP-Rule" id="MF_00368"/>
    </source>
</evidence>
<evidence type="ECO:0000305" key="2"/>
<dbReference type="EMBL" id="CP001025">
    <property type="protein sequence ID" value="ACB62768.1"/>
    <property type="molecule type" value="Genomic_DNA"/>
</dbReference>
<dbReference type="RefSeq" id="WP_006759674.1">
    <property type="nucleotide sequence ID" value="NC_010551.1"/>
</dbReference>
<dbReference type="SMR" id="B1YRC1"/>
<dbReference type="GeneID" id="93084327"/>
<dbReference type="KEGG" id="bac:BamMC406_0267"/>
<dbReference type="HOGENOM" id="CLU_086499_3_2_4"/>
<dbReference type="OrthoDB" id="9811748at2"/>
<dbReference type="Proteomes" id="UP000001680">
    <property type="component" value="Chromosome 1"/>
</dbReference>
<dbReference type="GO" id="GO:0022625">
    <property type="term" value="C:cytosolic large ribosomal subunit"/>
    <property type="evidence" value="ECO:0007669"/>
    <property type="project" value="TreeGrafter"/>
</dbReference>
<dbReference type="GO" id="GO:0003729">
    <property type="term" value="F:mRNA binding"/>
    <property type="evidence" value="ECO:0007669"/>
    <property type="project" value="TreeGrafter"/>
</dbReference>
<dbReference type="GO" id="GO:0003735">
    <property type="term" value="F:structural constituent of ribosome"/>
    <property type="evidence" value="ECO:0007669"/>
    <property type="project" value="InterPro"/>
</dbReference>
<dbReference type="GO" id="GO:0006412">
    <property type="term" value="P:translation"/>
    <property type="evidence" value="ECO:0007669"/>
    <property type="project" value="UniProtKB-UniRule"/>
</dbReference>
<dbReference type="CDD" id="cd00387">
    <property type="entry name" value="Ribosomal_L7_L12"/>
    <property type="match status" value="1"/>
</dbReference>
<dbReference type="FunFam" id="3.30.1390.10:FF:000001">
    <property type="entry name" value="50S ribosomal protein L7/L12"/>
    <property type="match status" value="1"/>
</dbReference>
<dbReference type="Gene3D" id="3.30.1390.10">
    <property type="match status" value="1"/>
</dbReference>
<dbReference type="Gene3D" id="1.20.5.710">
    <property type="entry name" value="Single helix bin"/>
    <property type="match status" value="1"/>
</dbReference>
<dbReference type="HAMAP" id="MF_00368">
    <property type="entry name" value="Ribosomal_bL12"/>
    <property type="match status" value="1"/>
</dbReference>
<dbReference type="InterPro" id="IPR000206">
    <property type="entry name" value="Ribosomal_bL12"/>
</dbReference>
<dbReference type="InterPro" id="IPR013823">
    <property type="entry name" value="Ribosomal_bL12_C"/>
</dbReference>
<dbReference type="InterPro" id="IPR014719">
    <property type="entry name" value="Ribosomal_bL12_C/ClpS-like"/>
</dbReference>
<dbReference type="InterPro" id="IPR008932">
    <property type="entry name" value="Ribosomal_bL12_oligo"/>
</dbReference>
<dbReference type="InterPro" id="IPR036235">
    <property type="entry name" value="Ribosomal_bL12_oligo_N_sf"/>
</dbReference>
<dbReference type="NCBIfam" id="TIGR00855">
    <property type="entry name" value="L12"/>
    <property type="match status" value="1"/>
</dbReference>
<dbReference type="PANTHER" id="PTHR45987">
    <property type="entry name" value="39S RIBOSOMAL PROTEIN L12"/>
    <property type="match status" value="1"/>
</dbReference>
<dbReference type="PANTHER" id="PTHR45987:SF4">
    <property type="entry name" value="LARGE RIBOSOMAL SUBUNIT PROTEIN BL12M"/>
    <property type="match status" value="1"/>
</dbReference>
<dbReference type="Pfam" id="PF00542">
    <property type="entry name" value="Ribosomal_L12"/>
    <property type="match status" value="1"/>
</dbReference>
<dbReference type="Pfam" id="PF16320">
    <property type="entry name" value="Ribosomal_L12_N"/>
    <property type="match status" value="1"/>
</dbReference>
<dbReference type="SUPFAM" id="SSF54736">
    <property type="entry name" value="ClpS-like"/>
    <property type="match status" value="1"/>
</dbReference>
<dbReference type="SUPFAM" id="SSF48300">
    <property type="entry name" value="Ribosomal protein L7/12, oligomerisation (N-terminal) domain"/>
    <property type="match status" value="1"/>
</dbReference>
<protein>
    <recommendedName>
        <fullName evidence="1">Large ribosomal subunit protein bL12</fullName>
    </recommendedName>
    <alternativeName>
        <fullName evidence="2">50S ribosomal protein L7/L12</fullName>
    </alternativeName>
</protein>
<accession>B1YRC1</accession>
<proteinExistence type="inferred from homology"/>
<organism>
    <name type="scientific">Burkholderia ambifaria (strain MC40-6)</name>
    <dbReference type="NCBI Taxonomy" id="398577"/>
    <lineage>
        <taxon>Bacteria</taxon>
        <taxon>Pseudomonadati</taxon>
        <taxon>Pseudomonadota</taxon>
        <taxon>Betaproteobacteria</taxon>
        <taxon>Burkholderiales</taxon>
        <taxon>Burkholderiaceae</taxon>
        <taxon>Burkholderia</taxon>
        <taxon>Burkholderia cepacia complex</taxon>
    </lineage>
</organism>
<name>RL7_BURA4</name>